<keyword id="KW-0687">Ribonucleoprotein</keyword>
<keyword id="KW-0689">Ribosomal protein</keyword>
<keyword id="KW-0694">RNA-binding</keyword>
<keyword id="KW-0699">rRNA-binding</keyword>
<evidence type="ECO:0000255" key="1">
    <source>
        <dbReference type="HAMAP-Rule" id="MF_01302"/>
    </source>
</evidence>
<evidence type="ECO:0000305" key="2"/>
<feature type="chain" id="PRO_0000126523" description="Small ribosomal subunit protein uS8">
    <location>
        <begin position="1"/>
        <end position="130"/>
    </location>
</feature>
<comment type="function">
    <text evidence="1">One of the primary rRNA binding proteins, it binds directly to 16S rRNA central domain where it helps coordinate assembly of the platform of the 30S subunit.</text>
</comment>
<comment type="subunit">
    <text evidence="1">Part of the 30S ribosomal subunit. Contacts proteins S5 and S12.</text>
</comment>
<comment type="similarity">
    <text evidence="1">Belongs to the universal ribosomal protein uS8 family.</text>
</comment>
<organism>
    <name type="scientific">Vibrio vulnificus (strain YJ016)</name>
    <dbReference type="NCBI Taxonomy" id="196600"/>
    <lineage>
        <taxon>Bacteria</taxon>
        <taxon>Pseudomonadati</taxon>
        <taxon>Pseudomonadota</taxon>
        <taxon>Gammaproteobacteria</taxon>
        <taxon>Vibrionales</taxon>
        <taxon>Vibrionaceae</taxon>
        <taxon>Vibrio</taxon>
    </lineage>
</organism>
<dbReference type="EMBL" id="BA000037">
    <property type="protein sequence ID" value="BAC93153.1"/>
    <property type="molecule type" value="Genomic_DNA"/>
</dbReference>
<dbReference type="RefSeq" id="WP_011078819.1">
    <property type="nucleotide sequence ID" value="NC_005139.1"/>
</dbReference>
<dbReference type="SMR" id="Q7MPH4"/>
<dbReference type="STRING" id="672.VV93_v1c03600"/>
<dbReference type="GeneID" id="93895052"/>
<dbReference type="KEGG" id="vvy:VV0389"/>
<dbReference type="eggNOG" id="COG0096">
    <property type="taxonomic scope" value="Bacteria"/>
</dbReference>
<dbReference type="HOGENOM" id="CLU_098428_0_0_6"/>
<dbReference type="Proteomes" id="UP000002675">
    <property type="component" value="Chromosome I"/>
</dbReference>
<dbReference type="GO" id="GO:1990904">
    <property type="term" value="C:ribonucleoprotein complex"/>
    <property type="evidence" value="ECO:0007669"/>
    <property type="project" value="UniProtKB-KW"/>
</dbReference>
<dbReference type="GO" id="GO:0005840">
    <property type="term" value="C:ribosome"/>
    <property type="evidence" value="ECO:0007669"/>
    <property type="project" value="UniProtKB-KW"/>
</dbReference>
<dbReference type="GO" id="GO:0019843">
    <property type="term" value="F:rRNA binding"/>
    <property type="evidence" value="ECO:0007669"/>
    <property type="project" value="UniProtKB-UniRule"/>
</dbReference>
<dbReference type="GO" id="GO:0003735">
    <property type="term" value="F:structural constituent of ribosome"/>
    <property type="evidence" value="ECO:0007669"/>
    <property type="project" value="InterPro"/>
</dbReference>
<dbReference type="GO" id="GO:0006412">
    <property type="term" value="P:translation"/>
    <property type="evidence" value="ECO:0007669"/>
    <property type="project" value="UniProtKB-UniRule"/>
</dbReference>
<dbReference type="FunFam" id="3.30.1370.30:FF:000003">
    <property type="entry name" value="30S ribosomal protein S8"/>
    <property type="match status" value="1"/>
</dbReference>
<dbReference type="FunFam" id="3.30.1490.10:FF:000001">
    <property type="entry name" value="30S ribosomal protein S8"/>
    <property type="match status" value="1"/>
</dbReference>
<dbReference type="Gene3D" id="3.30.1370.30">
    <property type="match status" value="1"/>
</dbReference>
<dbReference type="Gene3D" id="3.30.1490.10">
    <property type="match status" value="1"/>
</dbReference>
<dbReference type="HAMAP" id="MF_01302_B">
    <property type="entry name" value="Ribosomal_uS8_B"/>
    <property type="match status" value="1"/>
</dbReference>
<dbReference type="InterPro" id="IPR000630">
    <property type="entry name" value="Ribosomal_uS8"/>
</dbReference>
<dbReference type="InterPro" id="IPR047863">
    <property type="entry name" value="Ribosomal_uS8_CS"/>
</dbReference>
<dbReference type="InterPro" id="IPR035987">
    <property type="entry name" value="Ribosomal_uS8_sf"/>
</dbReference>
<dbReference type="NCBIfam" id="NF001109">
    <property type="entry name" value="PRK00136.1"/>
    <property type="match status" value="1"/>
</dbReference>
<dbReference type="PANTHER" id="PTHR11758">
    <property type="entry name" value="40S RIBOSOMAL PROTEIN S15A"/>
    <property type="match status" value="1"/>
</dbReference>
<dbReference type="Pfam" id="PF00410">
    <property type="entry name" value="Ribosomal_S8"/>
    <property type="match status" value="1"/>
</dbReference>
<dbReference type="SUPFAM" id="SSF56047">
    <property type="entry name" value="Ribosomal protein S8"/>
    <property type="match status" value="1"/>
</dbReference>
<dbReference type="PROSITE" id="PS00053">
    <property type="entry name" value="RIBOSOMAL_S8"/>
    <property type="match status" value="1"/>
</dbReference>
<reference key="1">
    <citation type="journal article" date="2003" name="Genome Res.">
        <title>Comparative genome analysis of Vibrio vulnificus, a marine pathogen.</title>
        <authorList>
            <person name="Chen C.-Y."/>
            <person name="Wu K.-M."/>
            <person name="Chang Y.-C."/>
            <person name="Chang C.-H."/>
            <person name="Tsai H.-C."/>
            <person name="Liao T.-L."/>
            <person name="Liu Y.-M."/>
            <person name="Chen H.-J."/>
            <person name="Shen A.B.-T."/>
            <person name="Li J.-C."/>
            <person name="Su T.-L."/>
            <person name="Shao C.-P."/>
            <person name="Lee C.-T."/>
            <person name="Hor L.-I."/>
            <person name="Tsai S.-F."/>
        </authorList>
    </citation>
    <scope>NUCLEOTIDE SEQUENCE [LARGE SCALE GENOMIC DNA]</scope>
    <source>
        <strain>YJ016</strain>
    </source>
</reference>
<sequence>MSMQDPISDMLTRIRNGQAANKVAVKMPSSKLKVAIAALLKAEGYIVDFAVEGEAKPELEVTLKYFQAKPVIEQLKRVSRPGLRVYKKKDDLPSVMGGLGVAVVSTSKGLMSDRAARKAGLGGEIICYVA</sequence>
<gene>
    <name evidence="1" type="primary">rpsH</name>
    <name type="ordered locus">VV0389</name>
</gene>
<name>RS8_VIBVY</name>
<proteinExistence type="inferred from homology"/>
<protein>
    <recommendedName>
        <fullName evidence="1">Small ribosomal subunit protein uS8</fullName>
    </recommendedName>
    <alternativeName>
        <fullName evidence="2">30S ribosomal protein S8</fullName>
    </alternativeName>
</protein>
<accession>Q7MPH4</accession>